<name>HAP1_HAEIN</name>
<comment type="function">
    <text evidence="1">Probable protease; promotes adherence and invasion by directly binding to a host cell structure.</text>
</comment>
<comment type="subcellular location">
    <molecule>Adhesion and penetration protein autotransporter</molecule>
    <subcellularLocation>
        <location evidence="1">Periplasm</location>
    </subcellularLocation>
</comment>
<comment type="subcellular location">
    <molecule>Adhesion and penetration protein</molecule>
    <subcellularLocation>
        <location evidence="6">Secreted</location>
    </subcellularLocation>
    <subcellularLocation>
        <location evidence="6">Cell surface</location>
    </subcellularLocation>
</comment>
<comment type="subcellular location">
    <molecule>Adhesion and penetration protein translocator</molecule>
    <subcellularLocation>
        <location evidence="1">Cell outer membrane</location>
        <topology evidence="1">Multi-pass membrane protein</topology>
    </subcellularLocation>
    <text evidence="1">The cleaved C-terminal fragment (autotransporter domain) is localized in the outer membrane.</text>
</comment>
<comment type="domain">
    <text evidence="1">The signal peptide, cleaved at the inner membrane, guides the autotransporter protein to the periplasmic space. Then, insertion of the C-terminal translocator domain in the outer membrane forms a hydrophilic pore for the translocation of the passenger domain to the bacterial cell surface, with subsequent cleavage (By similarity).</text>
</comment>
<comment type="sequence caution" evidence="6">
    <conflict type="erroneous termination">
        <sequence resource="EMBL" id="L42023"/>
    </conflict>
    <text>Truncated C-terminus.</text>
</comment>
<accession>P44596</accession>
<organism>
    <name type="scientific">Haemophilus influenzae (strain ATCC 51907 / DSM 11121 / KW20 / Rd)</name>
    <dbReference type="NCBI Taxonomy" id="71421"/>
    <lineage>
        <taxon>Bacteria</taxon>
        <taxon>Pseudomonadati</taxon>
        <taxon>Pseudomonadota</taxon>
        <taxon>Gammaproteobacteria</taxon>
        <taxon>Pasteurellales</taxon>
        <taxon>Pasteurellaceae</taxon>
        <taxon>Haemophilus</taxon>
    </lineage>
</organism>
<feature type="signal peptide" evidence="2">
    <location>
        <begin position="1"/>
        <end position="25"/>
    </location>
</feature>
<feature type="chain" id="PRO_0000387595" description="Adhesion and penetration protein autotransporter">
    <location>
        <begin position="26"/>
        <end position="1409"/>
    </location>
</feature>
<feature type="chain" id="PRO_0000026954" description="Adhesion and penetration protein">
    <location>
        <begin position="26"/>
        <end status="unknown"/>
    </location>
</feature>
<feature type="chain" id="PRO_0000026955" description="Adhesion and penetration protein translocator" evidence="2">
    <location>
        <begin status="unknown"/>
        <end position="1409"/>
    </location>
</feature>
<feature type="domain" description="Peptidase S6" evidence="4">
    <location>
        <begin position="26"/>
        <end position="294"/>
    </location>
</feature>
<feature type="domain" description="Autotransporter" evidence="3">
    <location>
        <begin position="1156"/>
        <end position="1409"/>
    </location>
</feature>
<feature type="region of interest" description="Disordered" evidence="5">
    <location>
        <begin position="866"/>
        <end position="888"/>
    </location>
</feature>
<feature type="region of interest" description="Disordered" evidence="5">
    <location>
        <begin position="1016"/>
        <end position="1078"/>
    </location>
</feature>
<feature type="compositionally biased region" description="Polar residues" evidence="5">
    <location>
        <begin position="1057"/>
        <end position="1067"/>
    </location>
</feature>
<feature type="compositionally biased region" description="Basic residues" evidence="5">
    <location>
        <begin position="1068"/>
        <end position="1077"/>
    </location>
</feature>
<feature type="active site" evidence="1">
    <location>
        <position position="250"/>
    </location>
</feature>
<dbReference type="EC" id="3.4.21.-"/>
<dbReference type="EMBL" id="L42023">
    <property type="status" value="NOT_ANNOTATED_CDS"/>
    <property type="molecule type" value="Genomic_DNA"/>
</dbReference>
<dbReference type="PIR" id="C64057">
    <property type="entry name" value="C64057"/>
</dbReference>
<dbReference type="SMR" id="P44596"/>
<dbReference type="MEROPS" id="S06.006"/>
<dbReference type="Proteomes" id="UP000000579">
    <property type="component" value="Chromosome"/>
</dbReference>
<dbReference type="GO" id="GO:0009279">
    <property type="term" value="C:cell outer membrane"/>
    <property type="evidence" value="ECO:0007669"/>
    <property type="project" value="UniProtKB-SubCell"/>
</dbReference>
<dbReference type="GO" id="GO:0009986">
    <property type="term" value="C:cell surface"/>
    <property type="evidence" value="ECO:0007669"/>
    <property type="project" value="UniProtKB-SubCell"/>
</dbReference>
<dbReference type="GO" id="GO:0005576">
    <property type="term" value="C:extracellular region"/>
    <property type="evidence" value="ECO:0007669"/>
    <property type="project" value="UniProtKB-SubCell"/>
</dbReference>
<dbReference type="GO" id="GO:0042597">
    <property type="term" value="C:periplasmic space"/>
    <property type="evidence" value="ECO:0007669"/>
    <property type="project" value="UniProtKB-SubCell"/>
</dbReference>
<dbReference type="GO" id="GO:0004252">
    <property type="term" value="F:serine-type endopeptidase activity"/>
    <property type="evidence" value="ECO:0007669"/>
    <property type="project" value="InterPro"/>
</dbReference>
<dbReference type="GO" id="GO:0007155">
    <property type="term" value="P:cell adhesion"/>
    <property type="evidence" value="ECO:0007669"/>
    <property type="project" value="UniProtKB-KW"/>
</dbReference>
<dbReference type="GO" id="GO:0006508">
    <property type="term" value="P:proteolysis"/>
    <property type="evidence" value="ECO:0007669"/>
    <property type="project" value="UniProtKB-KW"/>
</dbReference>
<dbReference type="CDD" id="cd01343">
    <property type="entry name" value="PL1_Passenger_AT"/>
    <property type="match status" value="1"/>
</dbReference>
<dbReference type="Gene3D" id="2.160.20.20">
    <property type="match status" value="1"/>
</dbReference>
<dbReference type="Gene3D" id="2.40.10.120">
    <property type="match status" value="1"/>
</dbReference>
<dbReference type="Gene3D" id="2.40.128.130">
    <property type="entry name" value="Autotransporter beta-domain"/>
    <property type="match status" value="1"/>
</dbReference>
<dbReference type="InterPro" id="IPR005546">
    <property type="entry name" value="Autotransporte_beta"/>
</dbReference>
<dbReference type="InterPro" id="IPR036709">
    <property type="entry name" value="Autotransporte_beta_dom_sf"/>
</dbReference>
<dbReference type="InterPro" id="IPR012332">
    <property type="entry name" value="Autotransporter_pectin_lyase_C"/>
</dbReference>
<dbReference type="InterPro" id="IPR050909">
    <property type="entry name" value="Bact_Autotransporter_VF"/>
</dbReference>
<dbReference type="InterPro" id="IPR006315">
    <property type="entry name" value="OM_autotransptr_brl_dom"/>
</dbReference>
<dbReference type="InterPro" id="IPR011050">
    <property type="entry name" value="Pectin_lyase_fold/virulence"/>
</dbReference>
<dbReference type="InterPro" id="IPR000710">
    <property type="entry name" value="Peptidase_S6"/>
</dbReference>
<dbReference type="InterPro" id="IPR030396">
    <property type="entry name" value="Peptidase_S6_dom"/>
</dbReference>
<dbReference type="InterPro" id="IPR004899">
    <property type="entry name" value="Pertactin_central"/>
</dbReference>
<dbReference type="NCBIfam" id="TIGR01414">
    <property type="entry name" value="autotrans_barl"/>
    <property type="match status" value="1"/>
</dbReference>
<dbReference type="PANTHER" id="PTHR12338:SF10">
    <property type="entry name" value="ADHESION AND PENETRATION PROTEIN AUTOTRANSPORTER"/>
    <property type="match status" value="1"/>
</dbReference>
<dbReference type="PANTHER" id="PTHR12338">
    <property type="entry name" value="AUTOTRANSPORTER"/>
    <property type="match status" value="1"/>
</dbReference>
<dbReference type="Pfam" id="PF24078">
    <property type="entry name" value="Beta-sol_PIC_HAP1_IgA0_2nd"/>
    <property type="match status" value="1"/>
</dbReference>
<dbReference type="Pfam" id="PF02395">
    <property type="entry name" value="Peptidase_S6"/>
    <property type="match status" value="1"/>
</dbReference>
<dbReference type="Pfam" id="PF03212">
    <property type="entry name" value="Pertactin"/>
    <property type="match status" value="1"/>
</dbReference>
<dbReference type="PRINTS" id="PR00921">
    <property type="entry name" value="IGASERPTASE"/>
</dbReference>
<dbReference type="SMART" id="SM00869">
    <property type="entry name" value="Autotransporter"/>
    <property type="match status" value="1"/>
</dbReference>
<dbReference type="SUPFAM" id="SSF103515">
    <property type="entry name" value="Autotransporter"/>
    <property type="match status" value="1"/>
</dbReference>
<dbReference type="SUPFAM" id="SSF51126">
    <property type="entry name" value="Pectin lyase-like"/>
    <property type="match status" value="1"/>
</dbReference>
<dbReference type="PROSITE" id="PS51208">
    <property type="entry name" value="AUTOTRANSPORTER"/>
    <property type="match status" value="1"/>
</dbReference>
<dbReference type="PROSITE" id="PS51691">
    <property type="entry name" value="PEPTIDASE_S6"/>
    <property type="match status" value="1"/>
</dbReference>
<reference key="1">
    <citation type="journal article" date="1995" name="Science">
        <title>Whole-genome random sequencing and assembly of Haemophilus influenzae Rd.</title>
        <authorList>
            <person name="Fleischmann R.D."/>
            <person name="Adams M.D."/>
            <person name="White O."/>
            <person name="Clayton R.A."/>
            <person name="Kirkness E.F."/>
            <person name="Kerlavage A.R."/>
            <person name="Bult C.J."/>
            <person name="Tomb J.-F."/>
            <person name="Dougherty B.A."/>
            <person name="Merrick J.M."/>
            <person name="McKenney K."/>
            <person name="Sutton G.G."/>
            <person name="FitzHugh W."/>
            <person name="Fields C.A."/>
            <person name="Gocayne J.D."/>
            <person name="Scott J.D."/>
            <person name="Shirley R."/>
            <person name="Liu L.-I."/>
            <person name="Glodek A."/>
            <person name="Kelley J.M."/>
            <person name="Weidman J.F."/>
            <person name="Phillips C.A."/>
            <person name="Spriggs T."/>
            <person name="Hedblom E."/>
            <person name="Cotton M.D."/>
            <person name="Utterback T.R."/>
            <person name="Hanna M.C."/>
            <person name="Nguyen D.T."/>
            <person name="Saudek D.M."/>
            <person name="Brandon R.C."/>
            <person name="Fine L.D."/>
            <person name="Fritchman J.L."/>
            <person name="Fuhrmann J.L."/>
            <person name="Geoghagen N.S.M."/>
            <person name="Gnehm C.L."/>
            <person name="McDonald L.A."/>
            <person name="Small K.V."/>
            <person name="Fraser C.M."/>
            <person name="Smith H.O."/>
            <person name="Venter J.C."/>
        </authorList>
    </citation>
    <scope>NUCLEOTIDE SEQUENCE [LARGE SCALE GENOMIC DNA]</scope>
    <source>
        <strain>ATCC 51907 / DSM 11121 / KW20 / Rd</strain>
    </source>
</reference>
<evidence type="ECO:0000250" key="1"/>
<evidence type="ECO:0000255" key="2"/>
<evidence type="ECO:0000255" key="3">
    <source>
        <dbReference type="PROSITE-ProRule" id="PRU00556"/>
    </source>
</evidence>
<evidence type="ECO:0000255" key="4">
    <source>
        <dbReference type="PROSITE-ProRule" id="PRU01028"/>
    </source>
</evidence>
<evidence type="ECO:0000256" key="5">
    <source>
        <dbReference type="SAM" id="MobiDB-lite"/>
    </source>
</evidence>
<evidence type="ECO:0000305" key="6"/>
<protein>
    <recommendedName>
        <fullName>Adhesion and penetration protein autotransporter</fullName>
        <ecNumber>3.4.21.-</ecNumber>
    </recommendedName>
    <component>
        <recommendedName>
            <fullName>Adhesion and penetration protein</fullName>
        </recommendedName>
    </component>
    <component>
        <recommendedName>
            <fullName>Adhesion and penetration protein translocator</fullName>
        </recommendedName>
        <alternativeName>
            <fullName>Helper peptide</fullName>
        </alternativeName>
    </component>
</protein>
<keyword id="KW-0130">Cell adhesion</keyword>
<keyword id="KW-0998">Cell outer membrane</keyword>
<keyword id="KW-0378">Hydrolase</keyword>
<keyword id="KW-0472">Membrane</keyword>
<keyword id="KW-0574">Periplasm</keyword>
<keyword id="KW-0645">Protease</keyword>
<keyword id="KW-1185">Reference proteome</keyword>
<keyword id="KW-0964">Secreted</keyword>
<keyword id="KW-0720">Serine protease</keyword>
<keyword id="KW-0732">Signal</keyword>
<keyword id="KW-0812">Transmembrane</keyword>
<keyword id="KW-1134">Transmembrane beta strand</keyword>
<keyword id="KW-0865">Zymogen</keyword>
<sequence length="1409" mass="156815">MKKTVFRLNFLTACVSLGIASQAWAGHTYFGIDYQYYRDFAENKGKFTVGAKNIEVYNKEGQLVGTSMTKAPMIDFSVVSRNGVAALVGDQYIVSVAHNGGYNDVDFGAEGRNPDQHRFTYQIVKRNNYQAWERKHPYDGDYHMPRLHKFVTEAEPVGMTTNMDGKVYADRENYPERVRIGSGRQYWRTDKDEETNVHSSYYVSGAYRYLTAGNTHTQSGNGNGTVNLSGNVVSPNHYGPLPTGGSKGDSGSPMFIYDAKKKQWLINAVLQTGHPFFGRGNGFQLIREEWFYNEVLAVDTPSVFQRYIPPINGHYSFVSNNDGTGKLTLTRPSKDGSKAKSEVGTVKLFNPSLNQTAKEHVKAAAGYNIYQPRMEYGKNIYLGDQGKGTLTIENNINQGAGGLYFEGNFVVKGKQNNITWQGAGVSIGQDATVEWKVHNPENDRLSKIGIGTLLVNGKGKNLGSLSAGNGKVILDQQADEAGQKQAFKEVGIVSGRATVQLNSTDQVDPNNIYFGFRGGRLDLNGHSLTFKRIQNTDEGAMIVNHNTTQVANITITGNESITAPSNKKNINKLDYSKEIAYNGWFGETDKNKHNGRLNLIYKPTTEDRTLLLSGGTNLKGDITQTKGKLFFSGRPTPHAYNHLDKRWSEMEGIPQGEIVWDYDWINRTFKAENFQIKGGSAVVSRNVSSIEGNWTVSNNANATFGVVPNQQNTICTRSDWTGLTTCKTVNLTDTKVINSIPITQINGSINLTNNATVNIHGLAKLNGNVTLIDHSQFTLSNNATQTGNIKLSNHANATVNNATLNGNVHLTDSAQFSLKNSHFWHQIQGDKDTTVTLENATWTMPSDTTLQNLTLNNSTVTLNSAYSASSNNAPRHRRSLETETTPTSAEHRFNTLTVNGKLSGQGTFQFTSSLFGYKSDKLKLSNDAEGDYTLSVRNTGKEPVTLEQLTLIESLDNKPLSDKLKFTLENDHVDAGALRYKLVKNKGEFRLHNPIKEQELLNDLVRAEQAEQTLEAKQVEQTAEKQKSKAKARSRRAVLSDTPSAQSLLNALEAKQVEQTTETQTSKPKTKKGRSKRALSAAFSDTPFDLSQLKVFEVKLEVINAQPQVKKEPQDQEEQGKQKELISRYSNSALSELSATVNSMFSVQDELDRLFVDQAQSALWTNIAQDKRRYDSDAFRAYQQKTNLRQIGVQKALDNGRIGAVFSHSRSDNTFDEQVKNHATLTMMSGFAQYQWGDLQFGVNVGAGISASKMAEEQSRKIHRKAINYGVNASYQFRLGQLGIQPYLGVNRYFIERENYQSEEVKVQTPSLAFNRYNAGIRVDYTFTPTNNISVKPYFFVNYVDVSNANVQTTVNSTMLQQSFGRYWQKEVGLKAEILHFQLSAFISKSQGSQLGKQQNVGVKLGYRW</sequence>
<proteinExistence type="inferred from homology"/>
<gene>
    <name type="primary">hap</name>
    <name type="ordered locus">HI_0248</name>
</gene>